<feature type="chain" id="PRO_1000095434" description="Thymidine kinase">
    <location>
        <begin position="1"/>
        <end position="194"/>
    </location>
</feature>
<feature type="active site" description="Proton acceptor" evidence="1">
    <location>
        <position position="90"/>
    </location>
</feature>
<feature type="binding site" evidence="1">
    <location>
        <begin position="15"/>
        <end position="22"/>
    </location>
    <ligand>
        <name>ATP</name>
        <dbReference type="ChEBI" id="CHEBI:30616"/>
    </ligand>
</feature>
<feature type="binding site" evidence="1">
    <location>
        <begin position="89"/>
        <end position="92"/>
    </location>
    <ligand>
        <name>ATP</name>
        <dbReference type="ChEBI" id="CHEBI:30616"/>
    </ligand>
</feature>
<feature type="binding site" evidence="1">
    <location>
        <position position="146"/>
    </location>
    <ligand>
        <name>Zn(2+)</name>
        <dbReference type="ChEBI" id="CHEBI:29105"/>
    </ligand>
</feature>
<feature type="binding site" evidence="1">
    <location>
        <position position="149"/>
    </location>
    <ligand>
        <name>Zn(2+)</name>
        <dbReference type="ChEBI" id="CHEBI:29105"/>
    </ligand>
</feature>
<feature type="binding site" evidence="1">
    <location>
        <position position="178"/>
    </location>
    <ligand>
        <name>Zn(2+)</name>
        <dbReference type="ChEBI" id="CHEBI:29105"/>
    </ligand>
</feature>
<feature type="binding site" evidence="1">
    <location>
        <position position="181"/>
    </location>
    <ligand>
        <name>Zn(2+)</name>
        <dbReference type="ChEBI" id="CHEBI:29105"/>
    </ligand>
</feature>
<protein>
    <recommendedName>
        <fullName evidence="1">Thymidine kinase</fullName>
        <ecNumber evidence="1">2.7.1.21</ecNumber>
    </recommendedName>
</protein>
<proteinExistence type="inferred from homology"/>
<reference key="1">
    <citation type="journal article" date="2008" name="Infect. Immun.">
        <title>Genome of Mycoplasma arthritidis.</title>
        <authorList>
            <person name="Dybvig K."/>
            <person name="Zuhua C."/>
            <person name="Lao P."/>
            <person name="Jordan D.S."/>
            <person name="French C.T."/>
            <person name="Tu A.H."/>
            <person name="Loraine A.E."/>
        </authorList>
    </citation>
    <scope>NUCLEOTIDE SEQUENCE [LARGE SCALE GENOMIC DNA]</scope>
    <source>
        <strain>158L3-1</strain>
    </source>
</reference>
<keyword id="KW-0067">ATP-binding</keyword>
<keyword id="KW-0963">Cytoplasm</keyword>
<keyword id="KW-0237">DNA synthesis</keyword>
<keyword id="KW-0418">Kinase</keyword>
<keyword id="KW-0479">Metal-binding</keyword>
<keyword id="KW-0547">Nucleotide-binding</keyword>
<keyword id="KW-1185">Reference proteome</keyword>
<keyword id="KW-0808">Transferase</keyword>
<keyword id="KW-0862">Zinc</keyword>
<accession>B3PM40</accession>
<sequence>MYKNFNEGMIEVITGPMFSGKSEELLKRIRTLEYAKLKPLVIKPEFDTRFSENEIVSRAGVKHKTHILKNINDVYFLLQEDKYKAVVIDEAHWFNEELVKVADDLANKGYLVIVAGLDQNYLREPFGPIPNLLAIAERVTKLQAICVKCQHAASTSFRKVAASEINLLGDFQEYEARCRKCHNAGQKEKLQKKV</sequence>
<gene>
    <name evidence="1" type="primary">tdk</name>
    <name type="ordered locus">MARTH_orf165</name>
</gene>
<dbReference type="EC" id="2.7.1.21" evidence="1"/>
<dbReference type="EMBL" id="CP001047">
    <property type="protein sequence ID" value="ACF07092.1"/>
    <property type="molecule type" value="Genomic_DNA"/>
</dbReference>
<dbReference type="RefSeq" id="WP_012498049.1">
    <property type="nucleotide sequence ID" value="NC_011025.1"/>
</dbReference>
<dbReference type="SMR" id="B3PM40"/>
<dbReference type="STRING" id="243272.MARTH_orf165"/>
<dbReference type="KEGG" id="mat:MARTH_orf165"/>
<dbReference type="eggNOG" id="COG1435">
    <property type="taxonomic scope" value="Bacteria"/>
</dbReference>
<dbReference type="HOGENOM" id="CLU_064400_3_0_14"/>
<dbReference type="Proteomes" id="UP000008812">
    <property type="component" value="Chromosome"/>
</dbReference>
<dbReference type="GO" id="GO:0005737">
    <property type="term" value="C:cytoplasm"/>
    <property type="evidence" value="ECO:0007669"/>
    <property type="project" value="UniProtKB-SubCell"/>
</dbReference>
<dbReference type="GO" id="GO:0005524">
    <property type="term" value="F:ATP binding"/>
    <property type="evidence" value="ECO:0007669"/>
    <property type="project" value="UniProtKB-UniRule"/>
</dbReference>
<dbReference type="GO" id="GO:0004797">
    <property type="term" value="F:thymidine kinase activity"/>
    <property type="evidence" value="ECO:0007669"/>
    <property type="project" value="UniProtKB-UniRule"/>
</dbReference>
<dbReference type="GO" id="GO:0008270">
    <property type="term" value="F:zinc ion binding"/>
    <property type="evidence" value="ECO:0007669"/>
    <property type="project" value="UniProtKB-UniRule"/>
</dbReference>
<dbReference type="GO" id="GO:0071897">
    <property type="term" value="P:DNA biosynthetic process"/>
    <property type="evidence" value="ECO:0007669"/>
    <property type="project" value="UniProtKB-KW"/>
</dbReference>
<dbReference type="GO" id="GO:0046104">
    <property type="term" value="P:thymidine metabolic process"/>
    <property type="evidence" value="ECO:0007669"/>
    <property type="project" value="TreeGrafter"/>
</dbReference>
<dbReference type="Gene3D" id="3.30.60.20">
    <property type="match status" value="1"/>
</dbReference>
<dbReference type="Gene3D" id="3.40.50.300">
    <property type="entry name" value="P-loop containing nucleotide triphosphate hydrolases"/>
    <property type="match status" value="1"/>
</dbReference>
<dbReference type="HAMAP" id="MF_00124">
    <property type="entry name" value="Thymidine_kinase"/>
    <property type="match status" value="1"/>
</dbReference>
<dbReference type="InterPro" id="IPR027417">
    <property type="entry name" value="P-loop_NTPase"/>
</dbReference>
<dbReference type="InterPro" id="IPR001267">
    <property type="entry name" value="Thymidine_kinase"/>
</dbReference>
<dbReference type="NCBIfam" id="NF003296">
    <property type="entry name" value="PRK04296.1-1"/>
    <property type="match status" value="1"/>
</dbReference>
<dbReference type="PANTHER" id="PTHR11441">
    <property type="entry name" value="THYMIDINE KINASE"/>
    <property type="match status" value="1"/>
</dbReference>
<dbReference type="PANTHER" id="PTHR11441:SF0">
    <property type="entry name" value="THYMIDINE KINASE, CYTOSOLIC"/>
    <property type="match status" value="1"/>
</dbReference>
<dbReference type="Pfam" id="PF00265">
    <property type="entry name" value="TK"/>
    <property type="match status" value="1"/>
</dbReference>
<dbReference type="PIRSF" id="PIRSF035805">
    <property type="entry name" value="TK_cell"/>
    <property type="match status" value="1"/>
</dbReference>
<dbReference type="SUPFAM" id="SSF57716">
    <property type="entry name" value="Glucocorticoid receptor-like (DNA-binding domain)"/>
    <property type="match status" value="1"/>
</dbReference>
<dbReference type="SUPFAM" id="SSF52540">
    <property type="entry name" value="P-loop containing nucleoside triphosphate hydrolases"/>
    <property type="match status" value="1"/>
</dbReference>
<evidence type="ECO:0000255" key="1">
    <source>
        <dbReference type="HAMAP-Rule" id="MF_00124"/>
    </source>
</evidence>
<comment type="catalytic activity">
    <reaction evidence="1">
        <text>thymidine + ATP = dTMP + ADP + H(+)</text>
        <dbReference type="Rhea" id="RHEA:19129"/>
        <dbReference type="ChEBI" id="CHEBI:15378"/>
        <dbReference type="ChEBI" id="CHEBI:17748"/>
        <dbReference type="ChEBI" id="CHEBI:30616"/>
        <dbReference type="ChEBI" id="CHEBI:63528"/>
        <dbReference type="ChEBI" id="CHEBI:456216"/>
        <dbReference type="EC" id="2.7.1.21"/>
    </reaction>
</comment>
<comment type="subunit">
    <text evidence="1">Homotetramer.</text>
</comment>
<comment type="subcellular location">
    <subcellularLocation>
        <location evidence="1">Cytoplasm</location>
    </subcellularLocation>
</comment>
<comment type="similarity">
    <text evidence="1">Belongs to the thymidine kinase family.</text>
</comment>
<name>KITH_META1</name>
<organism>
    <name type="scientific">Metamycoplasma arthritidis (strain 158L3-1)</name>
    <name type="common">Mycoplasma arthritidis</name>
    <dbReference type="NCBI Taxonomy" id="243272"/>
    <lineage>
        <taxon>Bacteria</taxon>
        <taxon>Bacillati</taxon>
        <taxon>Mycoplasmatota</taxon>
        <taxon>Mycoplasmoidales</taxon>
        <taxon>Metamycoplasmataceae</taxon>
        <taxon>Metamycoplasma</taxon>
    </lineage>
</organism>